<reference key="1">
    <citation type="submission" date="2005-06" db="EMBL/GenBank/DDBJ databases">
        <authorList>
            <consortium name="NIH - Zebrafish Gene Collection (ZGC) project"/>
        </authorList>
    </citation>
    <scope>NUCLEOTIDE SEQUENCE [LARGE SCALE MRNA]</scope>
    <source>
        <strain>AB</strain>
        <tissue>Egg</tissue>
        <tissue>Embryo</tissue>
    </source>
</reference>
<feature type="chain" id="PRO_0000317589" description="Mitochondrial S-adenosylmethionine carrier protein">
    <location>
        <begin position="1"/>
        <end position="267"/>
    </location>
</feature>
<feature type="transmembrane region" description="Helical; Name=1" evidence="2">
    <location>
        <begin position="5"/>
        <end position="25"/>
    </location>
</feature>
<feature type="transmembrane region" description="Helical; Name=2" evidence="2">
    <location>
        <begin position="49"/>
        <end position="69"/>
    </location>
</feature>
<feature type="transmembrane region" description="Helical; Name=3" evidence="2">
    <location>
        <begin position="85"/>
        <end position="105"/>
    </location>
</feature>
<feature type="transmembrane region" description="Helical; Name=4" evidence="2">
    <location>
        <begin position="142"/>
        <end position="162"/>
    </location>
</feature>
<feature type="transmembrane region" description="Helical; Name=5" evidence="2">
    <location>
        <begin position="182"/>
        <end position="202"/>
    </location>
</feature>
<feature type="transmembrane region" description="Helical; Name=6" evidence="2">
    <location>
        <begin position="238"/>
        <end position="258"/>
    </location>
</feature>
<feature type="repeat" description="Solcar 1">
    <location>
        <begin position="4"/>
        <end position="77"/>
    </location>
</feature>
<feature type="repeat" description="Solcar 2">
    <location>
        <begin position="86"/>
        <end position="168"/>
    </location>
</feature>
<feature type="repeat" description="Solcar 3">
    <location>
        <begin position="177"/>
        <end position="265"/>
    </location>
</feature>
<evidence type="ECO:0000250" key="1">
    <source>
        <dbReference type="UniProtKB" id="Q70HW3"/>
    </source>
</evidence>
<evidence type="ECO:0000255" key="2"/>
<evidence type="ECO:0000305" key="3"/>
<protein>
    <recommendedName>
        <fullName evidence="1">Mitochondrial S-adenosylmethionine carrier protein</fullName>
        <shortName evidence="1">SAM carrier</shortName>
    </recommendedName>
    <alternativeName>
        <fullName>Solute carrier family 25 member 26</fullName>
    </alternativeName>
</protein>
<keyword id="KW-0050">Antiport</keyword>
<keyword id="KW-0472">Membrane</keyword>
<keyword id="KW-0496">Mitochondrion</keyword>
<keyword id="KW-0999">Mitochondrion inner membrane</keyword>
<keyword id="KW-1185">Reference proteome</keyword>
<keyword id="KW-0677">Repeat</keyword>
<keyword id="KW-0949">S-adenosyl-L-methionine</keyword>
<keyword id="KW-0812">Transmembrane</keyword>
<keyword id="KW-1133">Transmembrane helix</keyword>
<keyword id="KW-0813">Transport</keyword>
<name>SAMC_DANRE</name>
<dbReference type="EMBL" id="BC096793">
    <property type="protein sequence ID" value="AAH96793.1"/>
    <property type="molecule type" value="mRNA"/>
</dbReference>
<dbReference type="EMBL" id="BC153538">
    <property type="protein sequence ID" value="AAI53539.1"/>
    <property type="molecule type" value="mRNA"/>
</dbReference>
<dbReference type="RefSeq" id="NP_001025314.1">
    <property type="nucleotide sequence ID" value="NM_001030143.1"/>
</dbReference>
<dbReference type="SMR" id="Q4V9P0"/>
<dbReference type="FunCoup" id="Q4V9P0">
    <property type="interactions" value="1625"/>
</dbReference>
<dbReference type="STRING" id="7955.ENSDARP00000075478"/>
<dbReference type="PaxDb" id="7955-ENSDARP00000075478"/>
<dbReference type="Ensembl" id="ENSDART00000081035">
    <property type="protein sequence ID" value="ENSDARP00000075478"/>
    <property type="gene ID" value="ENSDARG00000058208"/>
</dbReference>
<dbReference type="GeneID" id="560478"/>
<dbReference type="KEGG" id="dre:560478"/>
<dbReference type="AGR" id="ZFIN:ZDB-GENE-050913-126"/>
<dbReference type="CTD" id="115286"/>
<dbReference type="ZFIN" id="ZDB-GENE-050913-126">
    <property type="gene designation" value="slc25a26"/>
</dbReference>
<dbReference type="eggNOG" id="KOG0768">
    <property type="taxonomic scope" value="Eukaryota"/>
</dbReference>
<dbReference type="HOGENOM" id="CLU_015166_3_0_1"/>
<dbReference type="InParanoid" id="Q4V9P0"/>
<dbReference type="OMA" id="IGPRTMW"/>
<dbReference type="OrthoDB" id="276989at2759"/>
<dbReference type="PhylomeDB" id="Q4V9P0"/>
<dbReference type="TreeFam" id="TF313186"/>
<dbReference type="Reactome" id="R-DRE-425393">
    <property type="pathway name" value="Transport of inorganic cations/anions and amino acids/oligopeptides"/>
</dbReference>
<dbReference type="PRO" id="PR:Q4V9P0"/>
<dbReference type="Proteomes" id="UP000000437">
    <property type="component" value="Alternate scaffold 11"/>
</dbReference>
<dbReference type="Proteomes" id="UP000000437">
    <property type="component" value="Chromosome 11"/>
</dbReference>
<dbReference type="Bgee" id="ENSDARG00000058208">
    <property type="expression patterns" value="Expressed in mature ovarian follicle and 26 other cell types or tissues"/>
</dbReference>
<dbReference type="ExpressionAtlas" id="Q4V9P0">
    <property type="expression patterns" value="baseline and differential"/>
</dbReference>
<dbReference type="GO" id="GO:0005743">
    <property type="term" value="C:mitochondrial inner membrane"/>
    <property type="evidence" value="ECO:0000250"/>
    <property type="project" value="UniProtKB"/>
</dbReference>
<dbReference type="GO" id="GO:0005739">
    <property type="term" value="C:mitochondrion"/>
    <property type="evidence" value="ECO:0000314"/>
    <property type="project" value="ZFIN"/>
</dbReference>
<dbReference type="GO" id="GO:0000095">
    <property type="term" value="F:S-adenosyl-L-methionine transmembrane transporter activity"/>
    <property type="evidence" value="ECO:0000250"/>
    <property type="project" value="UniProtKB"/>
</dbReference>
<dbReference type="GO" id="GO:0180003">
    <property type="term" value="F:S-adenosyl-L-methionine:S-adenosyl-L-homocysteine antiporter activity"/>
    <property type="evidence" value="ECO:0000250"/>
    <property type="project" value="UniProtKB"/>
</dbReference>
<dbReference type="GO" id="GO:1990543">
    <property type="term" value="P:mitochondrial S-adenosyl-L-methionine transmembrane transport"/>
    <property type="evidence" value="ECO:0000250"/>
    <property type="project" value="UniProtKB"/>
</dbReference>
<dbReference type="GO" id="GO:0015805">
    <property type="term" value="P:S-adenosyl-L-methionine transport"/>
    <property type="evidence" value="ECO:0000250"/>
    <property type="project" value="UniProtKB"/>
</dbReference>
<dbReference type="FunFam" id="1.50.40.10:FF:000018">
    <property type="entry name" value="S-adenosylmethionine mitochondrial carrier protein-like"/>
    <property type="match status" value="1"/>
</dbReference>
<dbReference type="Gene3D" id="1.50.40.10">
    <property type="entry name" value="Mitochondrial carrier domain"/>
    <property type="match status" value="1"/>
</dbReference>
<dbReference type="InterPro" id="IPR018108">
    <property type="entry name" value="Mitochondrial_sb/sol_carrier"/>
</dbReference>
<dbReference type="InterPro" id="IPR023395">
    <property type="entry name" value="Mt_carrier_dom_sf"/>
</dbReference>
<dbReference type="PANTHER" id="PTHR45667">
    <property type="entry name" value="S-ADENOSYLMETHIONINE MITOCHONDRIAL CARRIER PROTEIN"/>
    <property type="match status" value="1"/>
</dbReference>
<dbReference type="Pfam" id="PF00153">
    <property type="entry name" value="Mito_carr"/>
    <property type="match status" value="3"/>
</dbReference>
<dbReference type="SUPFAM" id="SSF103506">
    <property type="entry name" value="Mitochondrial carrier"/>
    <property type="match status" value="1"/>
</dbReference>
<dbReference type="PROSITE" id="PS50920">
    <property type="entry name" value="SOLCAR"/>
    <property type="match status" value="3"/>
</dbReference>
<proteinExistence type="evidence at transcript level"/>
<sequence>MDRREFTASLVAGGCAGMCVDLTLFPLDTIKTRLQSQQGFYKAGGFRGIYAGVPSAAIGSFPNAAAFFVTYESTKSVFSGYTTTNLAPITHMLAASLGEIVACLIRVPTEVVKQRTQANPSISTYRVLLNSLQEEGFRGLYRGYGSTVLREIPFSLVQFPLWEYLKAVWWRRQGGRLDSWQAAVCGALAGGVAAFVTTPLDVAKTWIMLAKAGTSTASGNIPMVLCEVWRSRGIPGLFAGSIPRVMFISMGGFIFLGAYEKVRRTLL</sequence>
<comment type="function">
    <text evidence="1">Mitochondrial S-adenosyl-L-methionine/S-adenosyl-L-homocysteine antiporter. Mediates the exchange of cytosolic S-adenosyl-L-methionine, the predominant methyl-group donor for macromolecule methylation processes, for mitochondrial S-adenosylhomocysteine(SAH), a by-product of methylation reactions.</text>
</comment>
<comment type="catalytic activity">
    <reaction evidence="1">
        <text>S-adenosyl-L-homocysteine(out) + S-adenosyl-L-methionine(in) = S-adenosyl-L-homocysteine(in) + S-adenosyl-L-methionine(out)</text>
        <dbReference type="Rhea" id="RHEA:75479"/>
        <dbReference type="ChEBI" id="CHEBI:57856"/>
        <dbReference type="ChEBI" id="CHEBI:59789"/>
    </reaction>
</comment>
<comment type="subcellular location">
    <subcellularLocation>
        <location evidence="1">Mitochondrion inner membrane</location>
        <topology evidence="2">Multi-pass membrane protein</topology>
    </subcellularLocation>
</comment>
<comment type="similarity">
    <text evidence="3">Belongs to the mitochondrial carrier (TC 2.A.29) family.</text>
</comment>
<accession>Q4V9P0</accession>
<gene>
    <name type="primary">slc25a26</name>
    <name evidence="1" type="synonym">samc</name>
    <name type="ORF">zgc:110080</name>
</gene>
<organism>
    <name type="scientific">Danio rerio</name>
    <name type="common">Zebrafish</name>
    <name type="synonym">Brachydanio rerio</name>
    <dbReference type="NCBI Taxonomy" id="7955"/>
    <lineage>
        <taxon>Eukaryota</taxon>
        <taxon>Metazoa</taxon>
        <taxon>Chordata</taxon>
        <taxon>Craniata</taxon>
        <taxon>Vertebrata</taxon>
        <taxon>Euteleostomi</taxon>
        <taxon>Actinopterygii</taxon>
        <taxon>Neopterygii</taxon>
        <taxon>Teleostei</taxon>
        <taxon>Ostariophysi</taxon>
        <taxon>Cypriniformes</taxon>
        <taxon>Danionidae</taxon>
        <taxon>Danioninae</taxon>
        <taxon>Danio</taxon>
    </lineage>
</organism>